<dbReference type="EC" id="6.1.1.7" evidence="1"/>
<dbReference type="EMBL" id="AM920689">
    <property type="protein sequence ID" value="CAP51895.1"/>
    <property type="molecule type" value="Genomic_DNA"/>
</dbReference>
<dbReference type="SMR" id="B0RTY1"/>
<dbReference type="KEGG" id="xca:xcc-b100_2535"/>
<dbReference type="HOGENOM" id="CLU_004485_1_1_6"/>
<dbReference type="Proteomes" id="UP000001188">
    <property type="component" value="Chromosome"/>
</dbReference>
<dbReference type="GO" id="GO:0005829">
    <property type="term" value="C:cytosol"/>
    <property type="evidence" value="ECO:0007669"/>
    <property type="project" value="TreeGrafter"/>
</dbReference>
<dbReference type="GO" id="GO:0004813">
    <property type="term" value="F:alanine-tRNA ligase activity"/>
    <property type="evidence" value="ECO:0007669"/>
    <property type="project" value="UniProtKB-UniRule"/>
</dbReference>
<dbReference type="GO" id="GO:0002161">
    <property type="term" value="F:aminoacyl-tRNA deacylase activity"/>
    <property type="evidence" value="ECO:0007669"/>
    <property type="project" value="TreeGrafter"/>
</dbReference>
<dbReference type="GO" id="GO:0005524">
    <property type="term" value="F:ATP binding"/>
    <property type="evidence" value="ECO:0007669"/>
    <property type="project" value="UniProtKB-UniRule"/>
</dbReference>
<dbReference type="GO" id="GO:0000049">
    <property type="term" value="F:tRNA binding"/>
    <property type="evidence" value="ECO:0007669"/>
    <property type="project" value="UniProtKB-KW"/>
</dbReference>
<dbReference type="GO" id="GO:0008270">
    <property type="term" value="F:zinc ion binding"/>
    <property type="evidence" value="ECO:0007669"/>
    <property type="project" value="UniProtKB-UniRule"/>
</dbReference>
<dbReference type="GO" id="GO:0006419">
    <property type="term" value="P:alanyl-tRNA aminoacylation"/>
    <property type="evidence" value="ECO:0007669"/>
    <property type="project" value="UniProtKB-UniRule"/>
</dbReference>
<dbReference type="GO" id="GO:0045892">
    <property type="term" value="P:negative regulation of DNA-templated transcription"/>
    <property type="evidence" value="ECO:0007669"/>
    <property type="project" value="TreeGrafter"/>
</dbReference>
<dbReference type="CDD" id="cd00673">
    <property type="entry name" value="AlaRS_core"/>
    <property type="match status" value="1"/>
</dbReference>
<dbReference type="FunFam" id="2.40.30.130:FF:000001">
    <property type="entry name" value="Alanine--tRNA ligase"/>
    <property type="match status" value="1"/>
</dbReference>
<dbReference type="FunFam" id="3.10.310.40:FF:000001">
    <property type="entry name" value="Alanine--tRNA ligase"/>
    <property type="match status" value="1"/>
</dbReference>
<dbReference type="FunFam" id="3.30.54.20:FF:000001">
    <property type="entry name" value="Alanine--tRNA ligase"/>
    <property type="match status" value="1"/>
</dbReference>
<dbReference type="FunFam" id="3.30.930.10:FF:000004">
    <property type="entry name" value="Alanine--tRNA ligase"/>
    <property type="match status" value="1"/>
</dbReference>
<dbReference type="FunFam" id="3.30.980.10:FF:000004">
    <property type="entry name" value="Alanine--tRNA ligase, cytoplasmic"/>
    <property type="match status" value="1"/>
</dbReference>
<dbReference type="Gene3D" id="2.40.30.130">
    <property type="match status" value="1"/>
</dbReference>
<dbReference type="Gene3D" id="3.10.310.40">
    <property type="match status" value="1"/>
</dbReference>
<dbReference type="Gene3D" id="3.30.54.20">
    <property type="match status" value="1"/>
</dbReference>
<dbReference type="Gene3D" id="6.10.250.550">
    <property type="match status" value="1"/>
</dbReference>
<dbReference type="Gene3D" id="3.30.930.10">
    <property type="entry name" value="Bira Bifunctional Protein, Domain 2"/>
    <property type="match status" value="1"/>
</dbReference>
<dbReference type="Gene3D" id="3.30.980.10">
    <property type="entry name" value="Threonyl-trna Synthetase, Chain A, domain 2"/>
    <property type="match status" value="1"/>
</dbReference>
<dbReference type="HAMAP" id="MF_00036_B">
    <property type="entry name" value="Ala_tRNA_synth_B"/>
    <property type="match status" value="1"/>
</dbReference>
<dbReference type="InterPro" id="IPR045864">
    <property type="entry name" value="aa-tRNA-synth_II/BPL/LPL"/>
</dbReference>
<dbReference type="InterPro" id="IPR002318">
    <property type="entry name" value="Ala-tRNA-lgiase_IIc"/>
</dbReference>
<dbReference type="InterPro" id="IPR018162">
    <property type="entry name" value="Ala-tRNA-ligase_IIc_anticod-bd"/>
</dbReference>
<dbReference type="InterPro" id="IPR018165">
    <property type="entry name" value="Ala-tRNA-synth_IIc_core"/>
</dbReference>
<dbReference type="InterPro" id="IPR018164">
    <property type="entry name" value="Ala-tRNA-synth_IIc_N"/>
</dbReference>
<dbReference type="InterPro" id="IPR050058">
    <property type="entry name" value="Ala-tRNA_ligase"/>
</dbReference>
<dbReference type="InterPro" id="IPR023033">
    <property type="entry name" value="Ala_tRNA_ligase_euk/bac"/>
</dbReference>
<dbReference type="InterPro" id="IPR003156">
    <property type="entry name" value="DHHA1_dom"/>
</dbReference>
<dbReference type="InterPro" id="IPR018163">
    <property type="entry name" value="Thr/Ala-tRNA-synth_IIc_edit"/>
</dbReference>
<dbReference type="InterPro" id="IPR009000">
    <property type="entry name" value="Transl_B-barrel_sf"/>
</dbReference>
<dbReference type="InterPro" id="IPR012947">
    <property type="entry name" value="tRNA_SAD"/>
</dbReference>
<dbReference type="NCBIfam" id="TIGR00344">
    <property type="entry name" value="alaS"/>
    <property type="match status" value="1"/>
</dbReference>
<dbReference type="PANTHER" id="PTHR11777:SF9">
    <property type="entry name" value="ALANINE--TRNA LIGASE, CYTOPLASMIC"/>
    <property type="match status" value="1"/>
</dbReference>
<dbReference type="PANTHER" id="PTHR11777">
    <property type="entry name" value="ALANYL-TRNA SYNTHETASE"/>
    <property type="match status" value="1"/>
</dbReference>
<dbReference type="Pfam" id="PF02272">
    <property type="entry name" value="DHHA1"/>
    <property type="match status" value="1"/>
</dbReference>
<dbReference type="Pfam" id="PF01411">
    <property type="entry name" value="tRNA-synt_2c"/>
    <property type="match status" value="1"/>
</dbReference>
<dbReference type="Pfam" id="PF07973">
    <property type="entry name" value="tRNA_SAD"/>
    <property type="match status" value="1"/>
</dbReference>
<dbReference type="PRINTS" id="PR00980">
    <property type="entry name" value="TRNASYNTHALA"/>
</dbReference>
<dbReference type="SMART" id="SM00863">
    <property type="entry name" value="tRNA_SAD"/>
    <property type="match status" value="1"/>
</dbReference>
<dbReference type="SUPFAM" id="SSF55681">
    <property type="entry name" value="Class II aaRS and biotin synthetases"/>
    <property type="match status" value="1"/>
</dbReference>
<dbReference type="SUPFAM" id="SSF101353">
    <property type="entry name" value="Putative anticodon-binding domain of alanyl-tRNA synthetase (AlaRS)"/>
    <property type="match status" value="1"/>
</dbReference>
<dbReference type="SUPFAM" id="SSF55186">
    <property type="entry name" value="ThrRS/AlaRS common domain"/>
    <property type="match status" value="1"/>
</dbReference>
<dbReference type="SUPFAM" id="SSF50447">
    <property type="entry name" value="Translation proteins"/>
    <property type="match status" value="1"/>
</dbReference>
<dbReference type="PROSITE" id="PS50860">
    <property type="entry name" value="AA_TRNA_LIGASE_II_ALA"/>
    <property type="match status" value="1"/>
</dbReference>
<protein>
    <recommendedName>
        <fullName evidence="1">Alanine--tRNA ligase</fullName>
        <ecNumber evidence="1">6.1.1.7</ecNumber>
    </recommendedName>
    <alternativeName>
        <fullName evidence="1">Alanyl-tRNA synthetase</fullName>
        <shortName evidence="1">AlaRS</shortName>
    </alternativeName>
</protein>
<name>SYA_XANCB</name>
<sequence length="882" mass="95352">MNAPAKFSTSQIRSDFLAFFEGKGHTIVPSAPLVPGNDPTLLFTNSGMVQFKDVFLGAEKRSYVRAADVQRCLRAGGKHNDLDSVGYTARHHTFFEMLGNWSFGDYFKKDAIAWAWELLTQVWKLPADRLLVTVYHTDEEAFELWRDMIGIPESRIVRIGDNKGAPYASDNFWQMADTGPCGPCTEIFFDHGDHIAGGPPGSPDEDGDRFIEIWNLVFMQFDRQPDGTLVPLPAPCVDTGMGLERLAAILQHVHTNYEIDVFQALIGKASALTGIADLENKSLRVIADHIRACSFLIVDGVLPSNEGRGYVLRRIIRRALRHGWMLGVRQLFFSKMVPTLVELMGEAYPELVVAQETVARALLAEEERFAETLDAGMKIFDDVASRSQEIIPGADAFRLYDTYGFPVDLTADIARERGMRVDMEGFEFAMERQRETARAAGKFGGGVALPADLVATMAPTVFLGYEAQDADALKVVALLKQGRPVDRAEAGDEVIVFTDRTPFYAESGGQVGDSGQLSGTDISIEVADTQKFAGQFHGHVGRIAEGTLKLGDVLSGGIDVQRRGKTILNHSATHLLHAALREVLGTHVQQKGSLVAPDRLRFDFSHFQPITAEELAVIERKVNAEVRTNHSVEVHNMAMQEALDFGAMALFGEKYGERVRVLKMGGYSTELCGGTHVSRTGDIGLFKITSEGGVSSGVRRIEAVTGQGALDYVAEEERRLGEAASLFGGNSTEIVDKVRALTDRQKRLERELESLKAKLASGATADLGASAVDVAGVKVIAVRLEGFDAKALREAMDRLKQQLGDSVIVLAGAAGGKVALVAGVNGSPTGKVKAGELLGHIASQIGGKGGGRPDLAQGGGEDGPALATALQGVPSWVKQHLG</sequence>
<gene>
    <name evidence="1" type="primary">alaS</name>
    <name type="ordered locus">xcc-b100_2535</name>
</gene>
<feature type="chain" id="PRO_0000347863" description="Alanine--tRNA ligase">
    <location>
        <begin position="1"/>
        <end position="882"/>
    </location>
</feature>
<feature type="binding site" evidence="1">
    <location>
        <position position="570"/>
    </location>
    <ligand>
        <name>Zn(2+)</name>
        <dbReference type="ChEBI" id="CHEBI:29105"/>
    </ligand>
</feature>
<feature type="binding site" evidence="1">
    <location>
        <position position="574"/>
    </location>
    <ligand>
        <name>Zn(2+)</name>
        <dbReference type="ChEBI" id="CHEBI:29105"/>
    </ligand>
</feature>
<feature type="binding site" evidence="1">
    <location>
        <position position="672"/>
    </location>
    <ligand>
        <name>Zn(2+)</name>
        <dbReference type="ChEBI" id="CHEBI:29105"/>
    </ligand>
</feature>
<feature type="binding site" evidence="1">
    <location>
        <position position="676"/>
    </location>
    <ligand>
        <name>Zn(2+)</name>
        <dbReference type="ChEBI" id="CHEBI:29105"/>
    </ligand>
</feature>
<accession>B0RTY1</accession>
<comment type="function">
    <text evidence="1">Catalyzes the attachment of alanine to tRNA(Ala) in a two-step reaction: alanine is first activated by ATP to form Ala-AMP and then transferred to the acceptor end of tRNA(Ala). Also edits incorrectly charged Ser-tRNA(Ala) and Gly-tRNA(Ala) via its editing domain.</text>
</comment>
<comment type="catalytic activity">
    <reaction evidence="1">
        <text>tRNA(Ala) + L-alanine + ATP = L-alanyl-tRNA(Ala) + AMP + diphosphate</text>
        <dbReference type="Rhea" id="RHEA:12540"/>
        <dbReference type="Rhea" id="RHEA-COMP:9657"/>
        <dbReference type="Rhea" id="RHEA-COMP:9923"/>
        <dbReference type="ChEBI" id="CHEBI:30616"/>
        <dbReference type="ChEBI" id="CHEBI:33019"/>
        <dbReference type="ChEBI" id="CHEBI:57972"/>
        <dbReference type="ChEBI" id="CHEBI:78442"/>
        <dbReference type="ChEBI" id="CHEBI:78497"/>
        <dbReference type="ChEBI" id="CHEBI:456215"/>
        <dbReference type="EC" id="6.1.1.7"/>
    </reaction>
</comment>
<comment type="cofactor">
    <cofactor evidence="1">
        <name>Zn(2+)</name>
        <dbReference type="ChEBI" id="CHEBI:29105"/>
    </cofactor>
    <text evidence="1">Binds 1 zinc ion per subunit.</text>
</comment>
<comment type="subcellular location">
    <subcellularLocation>
        <location evidence="1">Cytoplasm</location>
    </subcellularLocation>
</comment>
<comment type="domain">
    <text evidence="1">Consists of three domains; the N-terminal catalytic domain, the editing domain and the C-terminal C-Ala domain. The editing domain removes incorrectly charged amino acids, while the C-Ala domain, along with tRNA(Ala), serves as a bridge to cooperatively bring together the editing and aminoacylation centers thus stimulating deacylation of misacylated tRNAs.</text>
</comment>
<comment type="similarity">
    <text evidence="1">Belongs to the class-II aminoacyl-tRNA synthetase family.</text>
</comment>
<proteinExistence type="inferred from homology"/>
<keyword id="KW-0030">Aminoacyl-tRNA synthetase</keyword>
<keyword id="KW-0067">ATP-binding</keyword>
<keyword id="KW-0963">Cytoplasm</keyword>
<keyword id="KW-0436">Ligase</keyword>
<keyword id="KW-0479">Metal-binding</keyword>
<keyword id="KW-0547">Nucleotide-binding</keyword>
<keyword id="KW-0648">Protein biosynthesis</keyword>
<keyword id="KW-0694">RNA-binding</keyword>
<keyword id="KW-0820">tRNA-binding</keyword>
<keyword id="KW-0862">Zinc</keyword>
<organism>
    <name type="scientific">Xanthomonas campestris pv. campestris (strain B100)</name>
    <dbReference type="NCBI Taxonomy" id="509169"/>
    <lineage>
        <taxon>Bacteria</taxon>
        <taxon>Pseudomonadati</taxon>
        <taxon>Pseudomonadota</taxon>
        <taxon>Gammaproteobacteria</taxon>
        <taxon>Lysobacterales</taxon>
        <taxon>Lysobacteraceae</taxon>
        <taxon>Xanthomonas</taxon>
    </lineage>
</organism>
<evidence type="ECO:0000255" key="1">
    <source>
        <dbReference type="HAMAP-Rule" id="MF_00036"/>
    </source>
</evidence>
<reference key="1">
    <citation type="journal article" date="2008" name="J. Biotechnol.">
        <title>The genome of Xanthomonas campestris pv. campestris B100 and its use for the reconstruction of metabolic pathways involved in xanthan biosynthesis.</title>
        <authorList>
            <person name="Vorhoelter F.-J."/>
            <person name="Schneiker S."/>
            <person name="Goesmann A."/>
            <person name="Krause L."/>
            <person name="Bekel T."/>
            <person name="Kaiser O."/>
            <person name="Linke B."/>
            <person name="Patschkowski T."/>
            <person name="Rueckert C."/>
            <person name="Schmid J."/>
            <person name="Sidhu V.K."/>
            <person name="Sieber V."/>
            <person name="Tauch A."/>
            <person name="Watt S.A."/>
            <person name="Weisshaar B."/>
            <person name="Becker A."/>
            <person name="Niehaus K."/>
            <person name="Puehler A."/>
        </authorList>
    </citation>
    <scope>NUCLEOTIDE SEQUENCE [LARGE SCALE GENOMIC DNA]</scope>
    <source>
        <strain>B100</strain>
    </source>
</reference>